<evidence type="ECO:0000255" key="1"/>
<evidence type="ECO:0000305" key="2"/>
<keyword id="KW-1003">Cell membrane</keyword>
<keyword id="KW-0472">Membrane</keyword>
<keyword id="KW-1185">Reference proteome</keyword>
<keyword id="KW-0812">Transmembrane</keyword>
<keyword id="KW-1133">Transmembrane helix</keyword>
<gene>
    <name type="ordered locus">slr0305</name>
</gene>
<proteinExistence type="inferred from homology"/>
<name>Y305_SYNY3</name>
<protein>
    <recommendedName>
        <fullName>TVP38/TMEM64 family membrane protein slr0305</fullName>
    </recommendedName>
</protein>
<comment type="subcellular location">
    <subcellularLocation>
        <location evidence="2">Cell membrane</location>
        <topology evidence="2">Multi-pass membrane protein</topology>
    </subcellularLocation>
</comment>
<comment type="similarity">
    <text evidence="2">Belongs to the TVP38/TMEM64 family.</text>
</comment>
<sequence>MADYLLNALQWIDGLGTWAAIAFMLLYTVATVVFLPGSILTLGAGVVFGVILGSIYVFIGATLGATAAFLVGRYLARGWVAKKIAGNQKFKAIDEAVGKEGLKIVILTRLSPVFPFNLLNYAYGITNVSLKDYVIGSLGMIPGTIMYVYIGSLAGSLATLGTATNQANPTLQWTIRIVGFIATVAVTIYVTKIARKALNEAILTSEVDE</sequence>
<reference key="1">
    <citation type="journal article" date="1995" name="DNA Res.">
        <title>Sequence analysis of the genome of the unicellular cyanobacterium Synechocystis sp. strain PCC6803. I. Sequence features in the 1 Mb region from map positions 64% to 92% of the genome.</title>
        <authorList>
            <person name="Kaneko T."/>
            <person name="Tanaka A."/>
            <person name="Sato S."/>
            <person name="Kotani H."/>
            <person name="Sazuka T."/>
            <person name="Miyajima N."/>
            <person name="Sugiura M."/>
            <person name="Tabata S."/>
        </authorList>
    </citation>
    <scope>NUCLEOTIDE SEQUENCE [LARGE SCALE GENOMIC DNA]</scope>
    <source>
        <strain>ATCC 27184 / PCC 6803 / N-1</strain>
    </source>
</reference>
<reference key="2">
    <citation type="journal article" date="1996" name="DNA Res.">
        <title>Sequence analysis of the genome of the unicellular cyanobacterium Synechocystis sp. strain PCC6803. II. Sequence determination of the entire genome and assignment of potential protein-coding regions.</title>
        <authorList>
            <person name="Kaneko T."/>
            <person name="Sato S."/>
            <person name="Kotani H."/>
            <person name="Tanaka A."/>
            <person name="Asamizu E."/>
            <person name="Nakamura Y."/>
            <person name="Miyajima N."/>
            <person name="Hirosawa M."/>
            <person name="Sugiura M."/>
            <person name="Sasamoto S."/>
            <person name="Kimura T."/>
            <person name="Hosouchi T."/>
            <person name="Matsuno A."/>
            <person name="Muraki A."/>
            <person name="Nakazaki N."/>
            <person name="Naruo K."/>
            <person name="Okumura S."/>
            <person name="Shimpo S."/>
            <person name="Takeuchi C."/>
            <person name="Wada T."/>
            <person name="Watanabe A."/>
            <person name="Yamada M."/>
            <person name="Yasuda M."/>
            <person name="Tabata S."/>
        </authorList>
    </citation>
    <scope>NUCLEOTIDE SEQUENCE [LARGE SCALE GENOMIC DNA]</scope>
    <source>
        <strain>ATCC 27184 / PCC 6803 / Kazusa</strain>
    </source>
</reference>
<feature type="chain" id="PRO_0000198640" description="TVP38/TMEM64 family membrane protein slr0305">
    <location>
        <begin position="1"/>
        <end position="209"/>
    </location>
</feature>
<feature type="transmembrane region" description="Helical" evidence="1">
    <location>
        <begin position="15"/>
        <end position="35"/>
    </location>
</feature>
<feature type="transmembrane region" description="Helical" evidence="1">
    <location>
        <begin position="39"/>
        <end position="59"/>
    </location>
</feature>
<feature type="transmembrane region" description="Helical" evidence="1">
    <location>
        <begin position="110"/>
        <end position="130"/>
    </location>
</feature>
<feature type="transmembrane region" description="Helical" evidence="1">
    <location>
        <begin position="134"/>
        <end position="154"/>
    </location>
</feature>
<feature type="transmembrane region" description="Helical" evidence="1">
    <location>
        <begin position="171"/>
        <end position="191"/>
    </location>
</feature>
<accession>Q55909</accession>
<organism>
    <name type="scientific">Synechocystis sp. (strain ATCC 27184 / PCC 6803 / Kazusa)</name>
    <dbReference type="NCBI Taxonomy" id="1111708"/>
    <lineage>
        <taxon>Bacteria</taxon>
        <taxon>Bacillati</taxon>
        <taxon>Cyanobacteriota</taxon>
        <taxon>Cyanophyceae</taxon>
        <taxon>Synechococcales</taxon>
        <taxon>Merismopediaceae</taxon>
        <taxon>Synechocystis</taxon>
    </lineage>
</organism>
<dbReference type="EMBL" id="BA000022">
    <property type="protein sequence ID" value="BAA10672.1"/>
    <property type="molecule type" value="Genomic_DNA"/>
</dbReference>
<dbReference type="PIR" id="S76980">
    <property type="entry name" value="S76980"/>
</dbReference>
<dbReference type="FunCoup" id="Q55909">
    <property type="interactions" value="29"/>
</dbReference>
<dbReference type="IntAct" id="Q55909">
    <property type="interactions" value="4"/>
</dbReference>
<dbReference type="STRING" id="1148.gene:10500176"/>
<dbReference type="PaxDb" id="1148-1001792"/>
<dbReference type="EnsemblBacteria" id="BAA10672">
    <property type="protein sequence ID" value="BAA10672"/>
    <property type="gene ID" value="BAA10672"/>
</dbReference>
<dbReference type="KEGG" id="syn:slr0305"/>
<dbReference type="eggNOG" id="COG0398">
    <property type="taxonomic scope" value="Bacteria"/>
</dbReference>
<dbReference type="InParanoid" id="Q55909"/>
<dbReference type="PhylomeDB" id="Q55909"/>
<dbReference type="Proteomes" id="UP000001425">
    <property type="component" value="Chromosome"/>
</dbReference>
<dbReference type="GO" id="GO:0005886">
    <property type="term" value="C:plasma membrane"/>
    <property type="evidence" value="ECO:0000318"/>
    <property type="project" value="GO_Central"/>
</dbReference>
<dbReference type="InterPro" id="IPR015414">
    <property type="entry name" value="TMEM64"/>
</dbReference>
<dbReference type="InterPro" id="IPR032816">
    <property type="entry name" value="VTT_dom"/>
</dbReference>
<dbReference type="PANTHER" id="PTHR12677">
    <property type="entry name" value="GOLGI APPARATUS MEMBRANE PROTEIN TVP38-RELATED"/>
    <property type="match status" value="1"/>
</dbReference>
<dbReference type="PANTHER" id="PTHR12677:SF59">
    <property type="entry name" value="GOLGI APPARATUS MEMBRANE PROTEIN TVP38-RELATED"/>
    <property type="match status" value="1"/>
</dbReference>
<dbReference type="Pfam" id="PF09335">
    <property type="entry name" value="VTT_dom"/>
    <property type="match status" value="1"/>
</dbReference>